<feature type="signal peptide" evidence="3">
    <location>
        <begin position="1"/>
        <end position="30"/>
    </location>
</feature>
<feature type="propeptide" id="PRO_0000028644" evidence="3">
    <location>
        <begin position="31"/>
        <end status="unknown"/>
    </location>
</feature>
<feature type="chain" id="PRO_0000028645" description="Extracellular small neutral protease">
    <location>
        <begin status="unknown"/>
        <end position="215"/>
    </location>
</feature>
<feature type="active site" evidence="1">
    <location>
        <position position="158"/>
    </location>
</feature>
<feature type="binding site" evidence="2">
    <location>
        <position position="152"/>
    </location>
    <ligand>
        <name>Ca(2+)</name>
        <dbReference type="ChEBI" id="CHEBI:29108"/>
    </ligand>
</feature>
<feature type="binding site" evidence="2">
    <location>
        <position position="157"/>
    </location>
    <ligand>
        <name>Zn(2+)</name>
        <dbReference type="ChEBI" id="CHEBI:29105"/>
        <note>catalytic</note>
    </ligand>
</feature>
<feature type="binding site" evidence="2">
    <location>
        <position position="161"/>
    </location>
    <ligand>
        <name>Zn(2+)</name>
        <dbReference type="ChEBI" id="CHEBI:29105"/>
        <note>catalytic</note>
    </ligand>
</feature>
<feature type="binding site" evidence="2">
    <location>
        <position position="167"/>
    </location>
    <ligand>
        <name>Zn(2+)</name>
        <dbReference type="ChEBI" id="CHEBI:29105"/>
        <note>catalytic</note>
    </ligand>
</feature>
<feature type="disulfide bond" evidence="2">
    <location>
        <begin position="173"/>
        <end position="186"/>
    </location>
</feature>
<organism>
    <name type="scientific">Streptomyces coelicolor</name>
    <dbReference type="NCBI Taxonomy" id="1902"/>
    <lineage>
        <taxon>Bacteria</taxon>
        <taxon>Bacillati</taxon>
        <taxon>Actinomycetota</taxon>
        <taxon>Actinomycetes</taxon>
        <taxon>Kitasatosporales</taxon>
        <taxon>Streptomycetaceae</taxon>
        <taxon>Streptomyces</taxon>
        <taxon>Streptomyces albidoflavus group</taxon>
    </lineage>
</organism>
<proteinExistence type="inferred from homology"/>
<gene>
    <name type="primary">snpA</name>
    <name type="synonym">mprA</name>
</gene>
<protein>
    <recommendedName>
        <fullName>Extracellular small neutral protease</fullName>
        <ecNumber>3.4.24.77</ecNumber>
    </recommendedName>
    <alternativeName>
        <fullName>Extracellular metalloprotease</fullName>
    </alternativeName>
    <alternativeName>
        <fullName>Snapalysin</fullName>
    </alternativeName>
</protein>
<accession>P43164</accession>
<comment type="catalytic activity">
    <reaction>
        <text>Hydrolyzes proteins with a preference for Tyr or Phe in the P1' position. Has no action on amino-acid p-nitroanilides.</text>
        <dbReference type="EC" id="3.4.24.77"/>
    </reaction>
</comment>
<comment type="cofactor">
    <cofactor evidence="1">
        <name>Zn(2+)</name>
        <dbReference type="ChEBI" id="CHEBI:29105"/>
    </cofactor>
    <text evidence="1">Binds 1 zinc ion per subunit.</text>
</comment>
<comment type="subcellular location">
    <subcellularLocation>
        <location>Secreted</location>
    </subcellularLocation>
</comment>
<comment type="similarity">
    <text evidence="4">Belongs to the peptidase M7 family.</text>
</comment>
<sequence>MRMTRAASALAGLGLAVAAALGSVAPASAAAETSTPRSVAAYEASTENAAATRAFQEAVMKAVAEKRAANPGALAVTVTYDASAAPTFRSQIASSTSIWNGAVSNVRLQEGSNADFTYREGNDPRGSYASTEAHGRGYIFLDYAQNQQYNSTRVTTHETGHVLGLPDTYSGPCSQLMSGGGPGPSCTNAQPDSAERSRVEQLWANGLAEAAAEVR</sequence>
<dbReference type="EC" id="3.4.24.77"/>
<dbReference type="EMBL" id="Z11929">
    <property type="protein sequence ID" value="CAA77985.1"/>
    <property type="molecule type" value="Genomic_DNA"/>
</dbReference>
<dbReference type="PIR" id="S25187">
    <property type="entry name" value="S25187"/>
</dbReference>
<dbReference type="SMR" id="P43164"/>
<dbReference type="MEROPS" id="M07.001"/>
<dbReference type="GO" id="GO:0005576">
    <property type="term" value="C:extracellular region"/>
    <property type="evidence" value="ECO:0007669"/>
    <property type="project" value="UniProtKB-SubCell"/>
</dbReference>
<dbReference type="GO" id="GO:0004222">
    <property type="term" value="F:metalloendopeptidase activity"/>
    <property type="evidence" value="ECO:0007669"/>
    <property type="project" value="InterPro"/>
</dbReference>
<dbReference type="GO" id="GO:0008270">
    <property type="term" value="F:zinc ion binding"/>
    <property type="evidence" value="ECO:0007669"/>
    <property type="project" value="InterPro"/>
</dbReference>
<dbReference type="GO" id="GO:0006508">
    <property type="term" value="P:proteolysis"/>
    <property type="evidence" value="ECO:0007669"/>
    <property type="project" value="UniProtKB-KW"/>
</dbReference>
<dbReference type="Gene3D" id="3.40.390.10">
    <property type="entry name" value="Collagenase (Catalytic Domain)"/>
    <property type="match status" value="1"/>
</dbReference>
<dbReference type="InterPro" id="IPR024079">
    <property type="entry name" value="MetalloPept_cat_dom_sf"/>
</dbReference>
<dbReference type="InterPro" id="IPR000013">
    <property type="entry name" value="Peptidase_M7"/>
</dbReference>
<dbReference type="NCBIfam" id="NF033628">
    <property type="entry name" value="snapalysin"/>
    <property type="match status" value="1"/>
</dbReference>
<dbReference type="Pfam" id="PF02031">
    <property type="entry name" value="Peptidase_M7"/>
    <property type="match status" value="1"/>
</dbReference>
<dbReference type="PIRSF" id="PIRSF016573">
    <property type="entry name" value="Peptidase_M7"/>
    <property type="match status" value="1"/>
</dbReference>
<dbReference type="PRINTS" id="PR00787">
    <property type="entry name" value="NEUTRALPTASE"/>
</dbReference>
<dbReference type="SUPFAM" id="SSF55486">
    <property type="entry name" value="Metalloproteases ('zincins'), catalytic domain"/>
    <property type="match status" value="1"/>
</dbReference>
<keyword id="KW-1015">Disulfide bond</keyword>
<keyword id="KW-0378">Hydrolase</keyword>
<keyword id="KW-0479">Metal-binding</keyword>
<keyword id="KW-0482">Metalloprotease</keyword>
<keyword id="KW-0645">Protease</keyword>
<keyword id="KW-0964">Secreted</keyword>
<keyword id="KW-0732">Signal</keyword>
<keyword id="KW-0862">Zinc</keyword>
<keyword id="KW-0865">Zymogen</keyword>
<name>SNPA_STRCH</name>
<reference key="1">
    <citation type="journal article" date="1992" name="Mol. Microbiol.">
        <title>A metalloprotease gene from Streptomyces coelicolor 'Muller' and its transcriptional activator, a member of the LysR family.</title>
        <authorList>
            <person name="Dammann T."/>
            <person name="Wohlleben W."/>
        </authorList>
    </citation>
    <scope>NUCLEOTIDE SEQUENCE [GENOMIC DNA]</scope>
    <source>
        <strain>DSM 3030 / Mueller</strain>
    </source>
</reference>
<evidence type="ECO:0000250" key="1"/>
<evidence type="ECO:0000250" key="2">
    <source>
        <dbReference type="UniProtKB" id="P56406"/>
    </source>
</evidence>
<evidence type="ECO:0000255" key="3"/>
<evidence type="ECO:0000305" key="4"/>